<name>FLUC_ECO57</name>
<organism>
    <name type="scientific">Escherichia coli O157:H7</name>
    <dbReference type="NCBI Taxonomy" id="83334"/>
    <lineage>
        <taxon>Bacteria</taxon>
        <taxon>Pseudomonadati</taxon>
        <taxon>Pseudomonadota</taxon>
        <taxon>Gammaproteobacteria</taxon>
        <taxon>Enterobacterales</taxon>
        <taxon>Enterobacteriaceae</taxon>
        <taxon>Escherichia</taxon>
    </lineage>
</organism>
<accession>P63861</accession>
<accession>Q8XBR8</accession>
<dbReference type="EMBL" id="AE005174">
    <property type="protein sequence ID" value="AAG54959.1"/>
    <property type="molecule type" value="Genomic_DNA"/>
</dbReference>
<dbReference type="EMBL" id="BA000007">
    <property type="protein sequence ID" value="BAB34086.1"/>
    <property type="molecule type" value="Genomic_DNA"/>
</dbReference>
<dbReference type="PIR" id="C85562">
    <property type="entry name" value="C85562"/>
</dbReference>
<dbReference type="PIR" id="G90711">
    <property type="entry name" value="G90711"/>
</dbReference>
<dbReference type="RefSeq" id="WP_000939738.1">
    <property type="nucleotide sequence ID" value="NZ_VOAI01000012.1"/>
</dbReference>
<dbReference type="SMR" id="P63861"/>
<dbReference type="STRING" id="155864.Z0770"/>
<dbReference type="GeneID" id="93776858"/>
<dbReference type="KEGG" id="ece:Z0770"/>
<dbReference type="KEGG" id="ecs:ECs_0663"/>
<dbReference type="PATRIC" id="fig|386585.9.peg.774"/>
<dbReference type="eggNOG" id="COG0239">
    <property type="taxonomic scope" value="Bacteria"/>
</dbReference>
<dbReference type="HOGENOM" id="CLU_114342_3_3_6"/>
<dbReference type="OMA" id="NDKWLNG"/>
<dbReference type="Proteomes" id="UP000000558">
    <property type="component" value="Chromosome"/>
</dbReference>
<dbReference type="Proteomes" id="UP000002519">
    <property type="component" value="Chromosome"/>
</dbReference>
<dbReference type="GO" id="GO:0005886">
    <property type="term" value="C:plasma membrane"/>
    <property type="evidence" value="ECO:0007669"/>
    <property type="project" value="UniProtKB-SubCell"/>
</dbReference>
<dbReference type="GO" id="GO:0062054">
    <property type="term" value="F:fluoride channel activity"/>
    <property type="evidence" value="ECO:0007669"/>
    <property type="project" value="UniProtKB-UniRule"/>
</dbReference>
<dbReference type="GO" id="GO:0046872">
    <property type="term" value="F:metal ion binding"/>
    <property type="evidence" value="ECO:0007669"/>
    <property type="project" value="UniProtKB-KW"/>
</dbReference>
<dbReference type="GO" id="GO:0140114">
    <property type="term" value="P:cellular detoxification of fluoride"/>
    <property type="evidence" value="ECO:0007669"/>
    <property type="project" value="UniProtKB-UniRule"/>
</dbReference>
<dbReference type="HAMAP" id="MF_00454">
    <property type="entry name" value="FluC"/>
    <property type="match status" value="1"/>
</dbReference>
<dbReference type="InterPro" id="IPR003691">
    <property type="entry name" value="FluC"/>
</dbReference>
<dbReference type="NCBIfam" id="TIGR00494">
    <property type="entry name" value="crcB"/>
    <property type="match status" value="1"/>
</dbReference>
<dbReference type="NCBIfam" id="NF010792">
    <property type="entry name" value="PRK14196.1"/>
    <property type="match status" value="1"/>
</dbReference>
<dbReference type="PANTHER" id="PTHR28259">
    <property type="entry name" value="FLUORIDE EXPORT PROTEIN 1-RELATED"/>
    <property type="match status" value="1"/>
</dbReference>
<dbReference type="PANTHER" id="PTHR28259:SF1">
    <property type="entry name" value="FLUORIDE EXPORT PROTEIN 1-RELATED"/>
    <property type="match status" value="1"/>
</dbReference>
<dbReference type="Pfam" id="PF02537">
    <property type="entry name" value="CRCB"/>
    <property type="match status" value="1"/>
</dbReference>
<proteinExistence type="inferred from homology"/>
<sequence>MLQLLLAVFIGGGTGSVARWLLSMRFNPLHQAIPLGTLAANLIGAFIIGMGFAWFSRMTNIDPVWKVLITTGFCGGLTTFSTFSAEVVFLLQEGRFGWALLNVFVNLLGSFAMTALAFWLFSASTAH</sequence>
<evidence type="ECO:0000255" key="1">
    <source>
        <dbReference type="HAMAP-Rule" id="MF_00454"/>
    </source>
</evidence>
<feature type="chain" id="PRO_0000110098" description="Fluoride-specific ion channel FluC">
    <location>
        <begin position="1"/>
        <end position="127"/>
    </location>
</feature>
<feature type="transmembrane region" description="Helical" evidence="1">
    <location>
        <begin position="4"/>
        <end position="24"/>
    </location>
</feature>
<feature type="transmembrane region" description="Helical" evidence="1">
    <location>
        <begin position="35"/>
        <end position="55"/>
    </location>
</feature>
<feature type="transmembrane region" description="Helical" evidence="1">
    <location>
        <begin position="71"/>
        <end position="91"/>
    </location>
</feature>
<feature type="transmembrane region" description="Helical" evidence="1">
    <location>
        <begin position="103"/>
        <end position="123"/>
    </location>
</feature>
<feature type="binding site" evidence="1">
    <location>
        <position position="75"/>
    </location>
    <ligand>
        <name>Na(+)</name>
        <dbReference type="ChEBI" id="CHEBI:29101"/>
        <note>structural</note>
    </ligand>
</feature>
<feature type="binding site" evidence="1">
    <location>
        <position position="78"/>
    </location>
    <ligand>
        <name>Na(+)</name>
        <dbReference type="ChEBI" id="CHEBI:29101"/>
        <note>structural</note>
    </ligand>
</feature>
<keyword id="KW-0997">Cell inner membrane</keyword>
<keyword id="KW-1003">Cell membrane</keyword>
<keyword id="KW-0407">Ion channel</keyword>
<keyword id="KW-0406">Ion transport</keyword>
<keyword id="KW-0472">Membrane</keyword>
<keyword id="KW-0479">Metal-binding</keyword>
<keyword id="KW-1185">Reference proteome</keyword>
<keyword id="KW-0915">Sodium</keyword>
<keyword id="KW-0812">Transmembrane</keyword>
<keyword id="KW-1133">Transmembrane helix</keyword>
<keyword id="KW-0813">Transport</keyword>
<comment type="function">
    <text evidence="1">Fluoride-specific ion channel. Important for reducing fluoride concentration in the cell, thus reducing its toxicity.</text>
</comment>
<comment type="catalytic activity">
    <reaction evidence="1">
        <text>fluoride(in) = fluoride(out)</text>
        <dbReference type="Rhea" id="RHEA:76159"/>
        <dbReference type="ChEBI" id="CHEBI:17051"/>
    </reaction>
    <physiologicalReaction direction="left-to-right" evidence="1">
        <dbReference type="Rhea" id="RHEA:76160"/>
    </physiologicalReaction>
</comment>
<comment type="activity regulation">
    <text evidence="1">Na(+) is not transported, but it plays an essential structural role and its presence is essential for fluoride channel function.</text>
</comment>
<comment type="subcellular location">
    <subcellularLocation>
        <location evidence="1">Cell inner membrane</location>
        <topology evidence="1">Multi-pass membrane protein</topology>
    </subcellularLocation>
</comment>
<comment type="similarity">
    <text evidence="1">Belongs to the fluoride channel Fluc/FEX (TC 1.A.43) family.</text>
</comment>
<reference key="1">
    <citation type="journal article" date="2001" name="Nature">
        <title>Genome sequence of enterohaemorrhagic Escherichia coli O157:H7.</title>
        <authorList>
            <person name="Perna N.T."/>
            <person name="Plunkett G. III"/>
            <person name="Burland V."/>
            <person name="Mau B."/>
            <person name="Glasner J.D."/>
            <person name="Rose D.J."/>
            <person name="Mayhew G.F."/>
            <person name="Evans P.S."/>
            <person name="Gregor J."/>
            <person name="Kirkpatrick H.A."/>
            <person name="Posfai G."/>
            <person name="Hackett J."/>
            <person name="Klink S."/>
            <person name="Boutin A."/>
            <person name="Shao Y."/>
            <person name="Miller L."/>
            <person name="Grotbeck E.J."/>
            <person name="Davis N.W."/>
            <person name="Lim A."/>
            <person name="Dimalanta E.T."/>
            <person name="Potamousis K."/>
            <person name="Apodaca J."/>
            <person name="Anantharaman T.S."/>
            <person name="Lin J."/>
            <person name="Yen G."/>
            <person name="Schwartz D.C."/>
            <person name="Welch R.A."/>
            <person name="Blattner F.R."/>
        </authorList>
    </citation>
    <scope>NUCLEOTIDE SEQUENCE [LARGE SCALE GENOMIC DNA]</scope>
    <source>
        <strain>O157:H7 / EDL933 / ATCC 700927 / EHEC</strain>
    </source>
</reference>
<reference key="2">
    <citation type="journal article" date="2001" name="DNA Res.">
        <title>Complete genome sequence of enterohemorrhagic Escherichia coli O157:H7 and genomic comparison with a laboratory strain K-12.</title>
        <authorList>
            <person name="Hayashi T."/>
            <person name="Makino K."/>
            <person name="Ohnishi M."/>
            <person name="Kurokawa K."/>
            <person name="Ishii K."/>
            <person name="Yokoyama K."/>
            <person name="Han C.-G."/>
            <person name="Ohtsubo E."/>
            <person name="Nakayama K."/>
            <person name="Murata T."/>
            <person name="Tanaka M."/>
            <person name="Tobe T."/>
            <person name="Iida T."/>
            <person name="Takami H."/>
            <person name="Honda T."/>
            <person name="Sasakawa C."/>
            <person name="Ogasawara N."/>
            <person name="Yasunaga T."/>
            <person name="Kuhara S."/>
            <person name="Shiba T."/>
            <person name="Hattori M."/>
            <person name="Shinagawa H."/>
        </authorList>
    </citation>
    <scope>NUCLEOTIDE SEQUENCE [LARGE SCALE GENOMIC DNA]</scope>
    <source>
        <strain>O157:H7 / Sakai / RIMD 0509952 / EHEC</strain>
    </source>
</reference>
<gene>
    <name evidence="1" type="primary">fluC</name>
    <name evidence="1" type="synonym">crcB</name>
    <name type="ordered locus">Z0770</name>
    <name type="ordered locus">ECs0663</name>
</gene>
<protein>
    <recommendedName>
        <fullName evidence="1">Fluoride-specific ion channel FluC</fullName>
    </recommendedName>
</protein>